<keyword id="KW-0067">ATP-binding</keyword>
<keyword id="KW-0963">Cytoplasm</keyword>
<keyword id="KW-0418">Kinase</keyword>
<keyword id="KW-0547">Nucleotide-binding</keyword>
<keyword id="KW-0808">Transferase</keyword>
<sequence>MLLTISGLPGSGTTTVGKLLAEHYSVDIISAGDVFRGLAKERGVTLAEFGRLAESDPSIDVEIDKRQSDIANSSDNLILEGRLAGQMAKKALKIWIKAPLEVRVKRIVDREGSSFDVRMQETVEREASEALRYKEIHSIDIHDLSVYDLVIDSSRWDQFVITDMLKKAIDASGSF</sequence>
<gene>
    <name evidence="1" type="primary">cmk</name>
    <name type="ordered locus">Mbur_0027</name>
</gene>
<reference key="1">
    <citation type="journal article" date="2009" name="ISME J.">
        <title>The genome sequence of the psychrophilic archaeon, Methanococcoides burtonii: the role of genome evolution in cold adaptation.</title>
        <authorList>
            <person name="Allen M.A."/>
            <person name="Lauro F.M."/>
            <person name="Williams T.J."/>
            <person name="Burg D."/>
            <person name="Siddiqui K.S."/>
            <person name="De Francisci D."/>
            <person name="Chong K.W."/>
            <person name="Pilak O."/>
            <person name="Chew H.H."/>
            <person name="De Maere M.Z."/>
            <person name="Ting L."/>
            <person name="Katrib M."/>
            <person name="Ng C."/>
            <person name="Sowers K.R."/>
            <person name="Galperin M.Y."/>
            <person name="Anderson I.J."/>
            <person name="Ivanova N."/>
            <person name="Dalin E."/>
            <person name="Martinez M."/>
            <person name="Lapidus A."/>
            <person name="Hauser L."/>
            <person name="Land M."/>
            <person name="Thomas T."/>
            <person name="Cavicchioli R."/>
        </authorList>
    </citation>
    <scope>NUCLEOTIDE SEQUENCE [LARGE SCALE GENOMIC DNA]</scope>
    <source>
        <strain>DSM 6242 / NBRC 107633 / OCM 468 / ACE-M</strain>
    </source>
</reference>
<organism>
    <name type="scientific">Methanococcoides burtonii (strain DSM 6242 / NBRC 107633 / OCM 468 / ACE-M)</name>
    <dbReference type="NCBI Taxonomy" id="259564"/>
    <lineage>
        <taxon>Archaea</taxon>
        <taxon>Methanobacteriati</taxon>
        <taxon>Methanobacteriota</taxon>
        <taxon>Stenosarchaea group</taxon>
        <taxon>Methanomicrobia</taxon>
        <taxon>Methanosarcinales</taxon>
        <taxon>Methanosarcinaceae</taxon>
        <taxon>Methanococcoides</taxon>
    </lineage>
</organism>
<feature type="chain" id="PRO_1000005672" description="Cytidylate kinase">
    <location>
        <begin position="1"/>
        <end position="175"/>
    </location>
</feature>
<feature type="binding site" evidence="1">
    <location>
        <begin position="7"/>
        <end position="15"/>
    </location>
    <ligand>
        <name>ATP</name>
        <dbReference type="ChEBI" id="CHEBI:30616"/>
    </ligand>
</feature>
<comment type="catalytic activity">
    <reaction evidence="1">
        <text>CMP + ATP = CDP + ADP</text>
        <dbReference type="Rhea" id="RHEA:11600"/>
        <dbReference type="ChEBI" id="CHEBI:30616"/>
        <dbReference type="ChEBI" id="CHEBI:58069"/>
        <dbReference type="ChEBI" id="CHEBI:60377"/>
        <dbReference type="ChEBI" id="CHEBI:456216"/>
        <dbReference type="EC" id="2.7.4.25"/>
    </reaction>
</comment>
<comment type="catalytic activity">
    <reaction evidence="1">
        <text>dCMP + ATP = dCDP + ADP</text>
        <dbReference type="Rhea" id="RHEA:25094"/>
        <dbReference type="ChEBI" id="CHEBI:30616"/>
        <dbReference type="ChEBI" id="CHEBI:57566"/>
        <dbReference type="ChEBI" id="CHEBI:58593"/>
        <dbReference type="ChEBI" id="CHEBI:456216"/>
        <dbReference type="EC" id="2.7.4.25"/>
    </reaction>
</comment>
<comment type="subcellular location">
    <subcellularLocation>
        <location evidence="1">Cytoplasm</location>
    </subcellularLocation>
</comment>
<comment type="similarity">
    <text evidence="1">Belongs to the cytidylate kinase family. Type 2 subfamily.</text>
</comment>
<proteinExistence type="inferred from homology"/>
<name>KCY_METBU</name>
<accession>Q12ZS5</accession>
<dbReference type="EC" id="2.7.4.25" evidence="1"/>
<dbReference type="EMBL" id="CP000300">
    <property type="protein sequence ID" value="ABE51051.1"/>
    <property type="molecule type" value="Genomic_DNA"/>
</dbReference>
<dbReference type="RefSeq" id="WP_011498215.1">
    <property type="nucleotide sequence ID" value="NC_007955.1"/>
</dbReference>
<dbReference type="SMR" id="Q12ZS5"/>
<dbReference type="STRING" id="259564.Mbur_0027"/>
<dbReference type="GeneID" id="3996890"/>
<dbReference type="KEGG" id="mbu:Mbur_0027"/>
<dbReference type="HOGENOM" id="CLU_079959_1_0_2"/>
<dbReference type="OrthoDB" id="31096at2157"/>
<dbReference type="Proteomes" id="UP000001979">
    <property type="component" value="Chromosome"/>
</dbReference>
<dbReference type="GO" id="GO:0005737">
    <property type="term" value="C:cytoplasm"/>
    <property type="evidence" value="ECO:0007669"/>
    <property type="project" value="UniProtKB-SubCell"/>
</dbReference>
<dbReference type="GO" id="GO:0005524">
    <property type="term" value="F:ATP binding"/>
    <property type="evidence" value="ECO:0007669"/>
    <property type="project" value="UniProtKB-UniRule"/>
</dbReference>
<dbReference type="GO" id="GO:0036430">
    <property type="term" value="F:CMP kinase activity"/>
    <property type="evidence" value="ECO:0007669"/>
    <property type="project" value="RHEA"/>
</dbReference>
<dbReference type="GO" id="GO:0036431">
    <property type="term" value="F:dCMP kinase activity"/>
    <property type="evidence" value="ECO:0007669"/>
    <property type="project" value="RHEA"/>
</dbReference>
<dbReference type="GO" id="GO:0006220">
    <property type="term" value="P:pyrimidine nucleotide metabolic process"/>
    <property type="evidence" value="ECO:0007669"/>
    <property type="project" value="UniProtKB-UniRule"/>
</dbReference>
<dbReference type="CDD" id="cd02020">
    <property type="entry name" value="CMPK"/>
    <property type="match status" value="1"/>
</dbReference>
<dbReference type="Gene3D" id="3.40.50.300">
    <property type="entry name" value="P-loop containing nucleotide triphosphate hydrolases"/>
    <property type="match status" value="1"/>
</dbReference>
<dbReference type="HAMAP" id="MF_00239">
    <property type="entry name" value="Cytidyl_kinase_type2"/>
    <property type="match status" value="1"/>
</dbReference>
<dbReference type="InterPro" id="IPR011892">
    <property type="entry name" value="Cyt_kin_arch"/>
</dbReference>
<dbReference type="InterPro" id="IPR011994">
    <property type="entry name" value="Cytidylate_kinase_dom"/>
</dbReference>
<dbReference type="InterPro" id="IPR027417">
    <property type="entry name" value="P-loop_NTPase"/>
</dbReference>
<dbReference type="NCBIfam" id="TIGR02173">
    <property type="entry name" value="cyt_kin_arch"/>
    <property type="match status" value="1"/>
</dbReference>
<dbReference type="Pfam" id="PF13189">
    <property type="entry name" value="Cytidylate_kin2"/>
    <property type="match status" value="1"/>
</dbReference>
<dbReference type="SUPFAM" id="SSF52540">
    <property type="entry name" value="P-loop containing nucleoside triphosphate hydrolases"/>
    <property type="match status" value="1"/>
</dbReference>
<protein>
    <recommendedName>
        <fullName evidence="1">Cytidylate kinase</fullName>
        <shortName evidence="1">CK</shortName>
        <ecNumber evidence="1">2.7.4.25</ecNumber>
    </recommendedName>
    <alternativeName>
        <fullName evidence="1">Cytidine monophosphate kinase</fullName>
        <shortName evidence="1">CMP kinase</shortName>
    </alternativeName>
</protein>
<evidence type="ECO:0000255" key="1">
    <source>
        <dbReference type="HAMAP-Rule" id="MF_00239"/>
    </source>
</evidence>